<proteinExistence type="inferred from homology"/>
<reference key="1">
    <citation type="journal article" date="2002" name="Genome Res.">
        <title>A complete sequence of the T. tengcongensis genome.</title>
        <authorList>
            <person name="Bao Q."/>
            <person name="Tian Y."/>
            <person name="Li W."/>
            <person name="Xu Z."/>
            <person name="Xuan Z."/>
            <person name="Hu S."/>
            <person name="Dong W."/>
            <person name="Yang J."/>
            <person name="Chen Y."/>
            <person name="Xue Y."/>
            <person name="Xu Y."/>
            <person name="Lai X."/>
            <person name="Huang L."/>
            <person name="Dong X."/>
            <person name="Ma Y."/>
            <person name="Ling L."/>
            <person name="Tan H."/>
            <person name="Chen R."/>
            <person name="Wang J."/>
            <person name="Yu J."/>
            <person name="Yang H."/>
        </authorList>
    </citation>
    <scope>NUCLEOTIDE SEQUENCE [LARGE SCALE GENOMIC DNA]</scope>
    <source>
        <strain>DSM 15242 / JCM 11007 / NBRC 100824 / MB4</strain>
    </source>
</reference>
<protein>
    <recommendedName>
        <fullName evidence="1">Queuine tRNA-ribosyltransferase</fullName>
        <ecNumber evidence="1">2.4.2.29</ecNumber>
    </recommendedName>
    <alternativeName>
        <fullName evidence="1">Guanine insertion enzyme</fullName>
    </alternativeName>
    <alternativeName>
        <fullName evidence="1">tRNA-guanine transglycosylase</fullName>
    </alternativeName>
</protein>
<comment type="function">
    <text evidence="1">Catalyzes the base-exchange of a guanine (G) residue with the queuine precursor 7-aminomethyl-7-deazaguanine (PreQ1) at position 34 (anticodon wobble position) in tRNAs with GU(N) anticodons (tRNA-Asp, -Asn, -His and -Tyr). Catalysis occurs through a double-displacement mechanism. The nucleophile active site attacks the C1' of nucleotide 34 to detach the guanine base from the RNA, forming a covalent enzyme-RNA intermediate. The proton acceptor active site deprotonates the incoming PreQ1, allowing a nucleophilic attack on the C1' of the ribose to form the product. After dissociation, two additional enzymatic reactions on the tRNA convert PreQ1 to queuine (Q), resulting in the hypermodified nucleoside queuosine (7-(((4,5-cis-dihydroxy-2-cyclopenten-1-yl)amino)methyl)-7-deazaguanosine).</text>
</comment>
<comment type="catalytic activity">
    <reaction evidence="1">
        <text>7-aminomethyl-7-carbaguanine + guanosine(34) in tRNA = 7-aminomethyl-7-carbaguanosine(34) in tRNA + guanine</text>
        <dbReference type="Rhea" id="RHEA:24104"/>
        <dbReference type="Rhea" id="RHEA-COMP:10341"/>
        <dbReference type="Rhea" id="RHEA-COMP:10342"/>
        <dbReference type="ChEBI" id="CHEBI:16235"/>
        <dbReference type="ChEBI" id="CHEBI:58703"/>
        <dbReference type="ChEBI" id="CHEBI:74269"/>
        <dbReference type="ChEBI" id="CHEBI:82833"/>
        <dbReference type="EC" id="2.4.2.29"/>
    </reaction>
</comment>
<comment type="cofactor">
    <cofactor evidence="1">
        <name>Zn(2+)</name>
        <dbReference type="ChEBI" id="CHEBI:29105"/>
    </cofactor>
    <text evidence="1">Binds 1 zinc ion per subunit.</text>
</comment>
<comment type="pathway">
    <text evidence="1">tRNA modification; tRNA-queuosine biosynthesis.</text>
</comment>
<comment type="subunit">
    <text evidence="1">Homodimer. Within each dimer, one monomer is responsible for RNA recognition and catalysis, while the other monomer binds to the replacement base PreQ1.</text>
</comment>
<comment type="similarity">
    <text evidence="1">Belongs to the queuine tRNA-ribosyltransferase family.</text>
</comment>
<feature type="chain" id="PRO_0000135548" description="Queuine tRNA-ribosyltransferase">
    <location>
        <begin position="1"/>
        <end position="375"/>
    </location>
</feature>
<feature type="region of interest" description="RNA binding" evidence="1">
    <location>
        <begin position="249"/>
        <end position="255"/>
    </location>
</feature>
<feature type="region of interest" description="RNA binding; important for wobble base 34 recognition" evidence="1">
    <location>
        <begin position="273"/>
        <end position="277"/>
    </location>
</feature>
<feature type="active site" description="Proton acceptor" evidence="1">
    <location>
        <position position="94"/>
    </location>
</feature>
<feature type="active site" description="Nucleophile" evidence="1">
    <location>
        <position position="268"/>
    </location>
</feature>
<feature type="binding site" evidence="1">
    <location>
        <begin position="94"/>
        <end position="98"/>
    </location>
    <ligand>
        <name>substrate</name>
    </ligand>
</feature>
<feature type="binding site" evidence="1">
    <location>
        <position position="148"/>
    </location>
    <ligand>
        <name>substrate</name>
    </ligand>
</feature>
<feature type="binding site" evidence="1">
    <location>
        <position position="191"/>
    </location>
    <ligand>
        <name>substrate</name>
    </ligand>
</feature>
<feature type="binding site" evidence="1">
    <location>
        <position position="218"/>
    </location>
    <ligand>
        <name>substrate</name>
    </ligand>
</feature>
<feature type="binding site" evidence="1">
    <location>
        <position position="306"/>
    </location>
    <ligand>
        <name>Zn(2+)</name>
        <dbReference type="ChEBI" id="CHEBI:29105"/>
    </ligand>
</feature>
<feature type="binding site" evidence="1">
    <location>
        <position position="308"/>
    </location>
    <ligand>
        <name>Zn(2+)</name>
        <dbReference type="ChEBI" id="CHEBI:29105"/>
    </ligand>
</feature>
<feature type="binding site" evidence="1">
    <location>
        <position position="311"/>
    </location>
    <ligand>
        <name>Zn(2+)</name>
        <dbReference type="ChEBI" id="CHEBI:29105"/>
    </ligand>
</feature>
<feature type="binding site" evidence="1">
    <location>
        <position position="337"/>
    </location>
    <ligand>
        <name>Zn(2+)</name>
        <dbReference type="ChEBI" id="CHEBI:29105"/>
    </ligand>
</feature>
<gene>
    <name evidence="1" type="primary">tgt</name>
    <name type="ordered locus">TTE1183</name>
</gene>
<name>TGT_CALS4</name>
<accession>Q8RAM9</accession>
<dbReference type="EC" id="2.4.2.29" evidence="1"/>
<dbReference type="EMBL" id="AE008691">
    <property type="protein sequence ID" value="AAM24414.1"/>
    <property type="molecule type" value="Genomic_DNA"/>
</dbReference>
<dbReference type="RefSeq" id="WP_011025518.1">
    <property type="nucleotide sequence ID" value="NC_003869.1"/>
</dbReference>
<dbReference type="SMR" id="Q8RAM9"/>
<dbReference type="STRING" id="273068.TTE1183"/>
<dbReference type="KEGG" id="tte:TTE1183"/>
<dbReference type="eggNOG" id="COG0343">
    <property type="taxonomic scope" value="Bacteria"/>
</dbReference>
<dbReference type="HOGENOM" id="CLU_022060_0_1_9"/>
<dbReference type="OrthoDB" id="9805417at2"/>
<dbReference type="UniPathway" id="UPA00392"/>
<dbReference type="Proteomes" id="UP000000555">
    <property type="component" value="Chromosome"/>
</dbReference>
<dbReference type="GO" id="GO:0005829">
    <property type="term" value="C:cytosol"/>
    <property type="evidence" value="ECO:0007669"/>
    <property type="project" value="TreeGrafter"/>
</dbReference>
<dbReference type="GO" id="GO:0046872">
    <property type="term" value="F:metal ion binding"/>
    <property type="evidence" value="ECO:0007669"/>
    <property type="project" value="UniProtKB-KW"/>
</dbReference>
<dbReference type="GO" id="GO:0008479">
    <property type="term" value="F:tRNA-guanosine(34) queuine transglycosylase activity"/>
    <property type="evidence" value="ECO:0007669"/>
    <property type="project" value="UniProtKB-UniRule"/>
</dbReference>
<dbReference type="GO" id="GO:0008616">
    <property type="term" value="P:queuosine biosynthetic process"/>
    <property type="evidence" value="ECO:0007669"/>
    <property type="project" value="UniProtKB-UniRule"/>
</dbReference>
<dbReference type="GO" id="GO:0002099">
    <property type="term" value="P:tRNA wobble guanine modification"/>
    <property type="evidence" value="ECO:0007669"/>
    <property type="project" value="TreeGrafter"/>
</dbReference>
<dbReference type="GO" id="GO:0101030">
    <property type="term" value="P:tRNA-guanine transglycosylation"/>
    <property type="evidence" value="ECO:0007669"/>
    <property type="project" value="InterPro"/>
</dbReference>
<dbReference type="FunFam" id="3.20.20.105:FF:000001">
    <property type="entry name" value="Queuine tRNA-ribosyltransferase"/>
    <property type="match status" value="1"/>
</dbReference>
<dbReference type="Gene3D" id="3.20.20.105">
    <property type="entry name" value="Queuine tRNA-ribosyltransferase-like"/>
    <property type="match status" value="1"/>
</dbReference>
<dbReference type="HAMAP" id="MF_00168">
    <property type="entry name" value="Q_tRNA_Tgt"/>
    <property type="match status" value="1"/>
</dbReference>
<dbReference type="InterPro" id="IPR050076">
    <property type="entry name" value="ArchSynthase1/Queuine_TRR"/>
</dbReference>
<dbReference type="InterPro" id="IPR004803">
    <property type="entry name" value="TGT"/>
</dbReference>
<dbReference type="InterPro" id="IPR036511">
    <property type="entry name" value="TGT-like_sf"/>
</dbReference>
<dbReference type="InterPro" id="IPR002616">
    <property type="entry name" value="tRNA_ribo_trans-like"/>
</dbReference>
<dbReference type="NCBIfam" id="TIGR00430">
    <property type="entry name" value="Q_tRNA_tgt"/>
    <property type="match status" value="1"/>
</dbReference>
<dbReference type="NCBIfam" id="TIGR00449">
    <property type="entry name" value="tgt_general"/>
    <property type="match status" value="1"/>
</dbReference>
<dbReference type="PANTHER" id="PTHR46499">
    <property type="entry name" value="QUEUINE TRNA-RIBOSYLTRANSFERASE"/>
    <property type="match status" value="1"/>
</dbReference>
<dbReference type="PANTHER" id="PTHR46499:SF1">
    <property type="entry name" value="QUEUINE TRNA-RIBOSYLTRANSFERASE"/>
    <property type="match status" value="1"/>
</dbReference>
<dbReference type="Pfam" id="PF01702">
    <property type="entry name" value="TGT"/>
    <property type="match status" value="1"/>
</dbReference>
<dbReference type="SUPFAM" id="SSF51713">
    <property type="entry name" value="tRNA-guanine transglycosylase"/>
    <property type="match status" value="1"/>
</dbReference>
<evidence type="ECO:0000255" key="1">
    <source>
        <dbReference type="HAMAP-Rule" id="MF_00168"/>
    </source>
</evidence>
<keyword id="KW-0328">Glycosyltransferase</keyword>
<keyword id="KW-0479">Metal-binding</keyword>
<keyword id="KW-0671">Queuosine biosynthesis</keyword>
<keyword id="KW-1185">Reference proteome</keyword>
<keyword id="KW-0808">Transferase</keyword>
<keyword id="KW-0819">tRNA processing</keyword>
<keyword id="KW-0862">Zinc</keyword>
<organism>
    <name type="scientific">Caldanaerobacter subterraneus subsp. tengcongensis (strain DSM 15242 / JCM 11007 / NBRC 100824 / MB4)</name>
    <name type="common">Thermoanaerobacter tengcongensis</name>
    <dbReference type="NCBI Taxonomy" id="273068"/>
    <lineage>
        <taxon>Bacteria</taxon>
        <taxon>Bacillati</taxon>
        <taxon>Bacillota</taxon>
        <taxon>Clostridia</taxon>
        <taxon>Thermoanaerobacterales</taxon>
        <taxon>Thermoanaerobacteraceae</taxon>
        <taxon>Caldanaerobacter</taxon>
    </lineage>
</organism>
<sequence length="375" mass="42931">MAAIKYQVIKKDARTKARLGILETPHGVIETPVFMPVGTQATVKAMTPDELKEMGATIILGNTYHLYLRPGHKIIEKAGGLHKFMNWDRAILTDSGGFQVFSLSSLRKITEDGVEFRSHIDGSKHFFTPEKVIEIQNSLGSDIIMSFDECAPYPADYDYVKRSMELTIKWAKRGKKAHKNTDRQALFGIVQGGTYKDLRRECAERLVDMDFPGYAIGGLSVGEPKDLMYEIIDFTTDYLPHDKPRYLMGVGTPEDLIEGVIRGVDMFDCVLPTRIARNGTVFTSRGKLIVRDAPYAEDFSPLDEECDCYTCKNYSRAYLRHLFKAKEILAARLATYHNLYFLIKLMEKIREAIRQDRLLEFKEEFLKKYYGNREE</sequence>